<gene>
    <name evidence="1" type="primary">ycaD</name>
    <name type="ordered locus">UTI89_C0972</name>
</gene>
<keyword id="KW-0997">Cell inner membrane</keyword>
<keyword id="KW-1003">Cell membrane</keyword>
<keyword id="KW-0472">Membrane</keyword>
<keyword id="KW-0812">Transmembrane</keyword>
<keyword id="KW-1133">Transmembrane helix</keyword>
<keyword id="KW-0813">Transport</keyword>
<dbReference type="EMBL" id="CP000243">
    <property type="protein sequence ID" value="ABE06457.1"/>
    <property type="molecule type" value="Genomic_DNA"/>
</dbReference>
<dbReference type="RefSeq" id="WP_000109282.1">
    <property type="nucleotide sequence ID" value="NZ_CP064825.1"/>
</dbReference>
<dbReference type="SMR" id="Q1RDV7"/>
<dbReference type="KEGG" id="eci:UTI89_C0972"/>
<dbReference type="HOGENOM" id="CLU_035018_1_2_6"/>
<dbReference type="Proteomes" id="UP000001952">
    <property type="component" value="Chromosome"/>
</dbReference>
<dbReference type="GO" id="GO:0005886">
    <property type="term" value="C:plasma membrane"/>
    <property type="evidence" value="ECO:0007669"/>
    <property type="project" value="UniProtKB-SubCell"/>
</dbReference>
<dbReference type="GO" id="GO:0022857">
    <property type="term" value="F:transmembrane transporter activity"/>
    <property type="evidence" value="ECO:0007669"/>
    <property type="project" value="UniProtKB-UniRule"/>
</dbReference>
<dbReference type="CDD" id="cd17477">
    <property type="entry name" value="MFS_YcaD_like"/>
    <property type="match status" value="1"/>
</dbReference>
<dbReference type="FunFam" id="1.20.1250.20:FF:000041">
    <property type="entry name" value="Uncharacterized MFS-type transporter YcaD"/>
    <property type="match status" value="1"/>
</dbReference>
<dbReference type="FunFam" id="1.20.1250.20:FF:000066">
    <property type="entry name" value="Uncharacterized MFS-type transporter YcaD"/>
    <property type="match status" value="1"/>
</dbReference>
<dbReference type="Gene3D" id="1.20.1250.20">
    <property type="entry name" value="MFS general substrate transporter like domains"/>
    <property type="match status" value="2"/>
</dbReference>
<dbReference type="HAMAP" id="MF_01149">
    <property type="entry name" value="MFS_YcaD"/>
    <property type="match status" value="1"/>
</dbReference>
<dbReference type="InterPro" id="IPR011701">
    <property type="entry name" value="MFS"/>
</dbReference>
<dbReference type="InterPro" id="IPR020846">
    <property type="entry name" value="MFS_dom"/>
</dbReference>
<dbReference type="InterPro" id="IPR036259">
    <property type="entry name" value="MFS_trans_sf"/>
</dbReference>
<dbReference type="InterPro" id="IPR023745">
    <property type="entry name" value="MFS_YcaD"/>
</dbReference>
<dbReference type="InterPro" id="IPR047200">
    <property type="entry name" value="MFS_YcaD-like"/>
</dbReference>
<dbReference type="NCBIfam" id="NF002962">
    <property type="entry name" value="PRK03633.1"/>
    <property type="match status" value="1"/>
</dbReference>
<dbReference type="PANTHER" id="PTHR23521">
    <property type="entry name" value="TRANSPORTER MFS SUPERFAMILY"/>
    <property type="match status" value="1"/>
</dbReference>
<dbReference type="PANTHER" id="PTHR23521:SF2">
    <property type="entry name" value="TRANSPORTER MFS SUPERFAMILY"/>
    <property type="match status" value="1"/>
</dbReference>
<dbReference type="Pfam" id="PF07690">
    <property type="entry name" value="MFS_1"/>
    <property type="match status" value="1"/>
</dbReference>
<dbReference type="SUPFAM" id="SSF103473">
    <property type="entry name" value="MFS general substrate transporter"/>
    <property type="match status" value="1"/>
</dbReference>
<dbReference type="PROSITE" id="PS50850">
    <property type="entry name" value="MFS"/>
    <property type="match status" value="1"/>
</dbReference>
<protein>
    <recommendedName>
        <fullName evidence="1">Uncharacterized MFS-type transporter YcaD</fullName>
    </recommendedName>
</protein>
<evidence type="ECO:0000255" key="1">
    <source>
        <dbReference type="HAMAP-Rule" id="MF_01149"/>
    </source>
</evidence>
<comment type="subcellular location">
    <subcellularLocation>
        <location evidence="1">Cell inner membrane</location>
        <topology evidence="1">Multi-pass membrane protein</topology>
    </subcellularLocation>
</comment>
<comment type="similarity">
    <text evidence="1">Belongs to the major facilitator superfamily. YcaD (TC 2.A.1.26) family.</text>
</comment>
<proteinExistence type="inferred from homology"/>
<accession>Q1RDV7</accession>
<feature type="chain" id="PRO_1000065492" description="Uncharacterized MFS-type transporter YcaD">
    <location>
        <begin position="1"/>
        <end position="382"/>
    </location>
</feature>
<feature type="transmembrane region" description="Helical" evidence="1">
    <location>
        <begin position="14"/>
        <end position="34"/>
    </location>
</feature>
<feature type="transmembrane region" description="Helical" evidence="1">
    <location>
        <begin position="45"/>
        <end position="65"/>
    </location>
</feature>
<feature type="transmembrane region" description="Helical" evidence="1">
    <location>
        <begin position="79"/>
        <end position="99"/>
    </location>
</feature>
<feature type="transmembrane region" description="Helical" evidence="1">
    <location>
        <begin position="102"/>
        <end position="122"/>
    </location>
</feature>
<feature type="transmembrane region" description="Helical" evidence="1">
    <location>
        <begin position="131"/>
        <end position="151"/>
    </location>
</feature>
<feature type="transmembrane region" description="Helical" evidence="1">
    <location>
        <begin position="157"/>
        <end position="177"/>
    </location>
</feature>
<feature type="transmembrane region" description="Helical" evidence="1">
    <location>
        <begin position="204"/>
        <end position="224"/>
    </location>
</feature>
<feature type="transmembrane region" description="Helical" evidence="1">
    <location>
        <begin position="235"/>
        <end position="255"/>
    </location>
</feature>
<feature type="transmembrane region" description="Helical" evidence="1">
    <location>
        <begin position="270"/>
        <end position="290"/>
    </location>
</feature>
<feature type="transmembrane region" description="Helical" evidence="1">
    <location>
        <begin position="291"/>
        <end position="311"/>
    </location>
</feature>
<feature type="transmembrane region" description="Helical" evidence="1">
    <location>
        <begin position="325"/>
        <end position="345"/>
    </location>
</feature>
<feature type="transmembrane region" description="Helical" evidence="1">
    <location>
        <begin position="348"/>
        <end position="368"/>
    </location>
</feature>
<sequence>MSTYTRPVMLLLSGLLLLTLAIAVLNTLVPLWLAQEHMSTWQVGVVSSSYFTGNLVGTLLTGYVIKRIGFNRSYYLASFIFAAGCAGLGLMIGFWSWLAWRFVAGIGCAMIWVVVESALMCSGTSRNRGRLLAAYMMVYYVGTFLGQLLVSKVSTELMSVLPWVTGLTLAGILPLLFTHVLNQQAENHDSTSITSMLKLRQARLGVNGCIISGIVLGSLYGLMPLYLNHKGVSNASIGFWMAVLVSAGILGQWPIGRLADKFGRLLVLRVQVFVVILGSIAMLSQAAMAPALFILGAAGFTLYPVAMAWACEKVEHHQLVAMNQALLLSYTVGSLLGPSFTAMLMQNFSDNLLFIMIASVSFIYLLMLLRNAGHTPKPVAHV</sequence>
<reference key="1">
    <citation type="journal article" date="2006" name="Proc. Natl. Acad. Sci. U.S.A.">
        <title>Identification of genes subject to positive selection in uropathogenic strains of Escherichia coli: a comparative genomics approach.</title>
        <authorList>
            <person name="Chen S.L."/>
            <person name="Hung C.-S."/>
            <person name="Xu J."/>
            <person name="Reigstad C.S."/>
            <person name="Magrini V."/>
            <person name="Sabo A."/>
            <person name="Blasiar D."/>
            <person name="Bieri T."/>
            <person name="Meyer R.R."/>
            <person name="Ozersky P."/>
            <person name="Armstrong J.R."/>
            <person name="Fulton R.S."/>
            <person name="Latreille J.P."/>
            <person name="Spieth J."/>
            <person name="Hooton T.M."/>
            <person name="Mardis E.R."/>
            <person name="Hultgren S.J."/>
            <person name="Gordon J.I."/>
        </authorList>
    </citation>
    <scope>NUCLEOTIDE SEQUENCE [LARGE SCALE GENOMIC DNA]</scope>
    <source>
        <strain>UTI89 / UPEC</strain>
    </source>
</reference>
<name>YCAD_ECOUT</name>
<organism>
    <name type="scientific">Escherichia coli (strain UTI89 / UPEC)</name>
    <dbReference type="NCBI Taxonomy" id="364106"/>
    <lineage>
        <taxon>Bacteria</taxon>
        <taxon>Pseudomonadati</taxon>
        <taxon>Pseudomonadota</taxon>
        <taxon>Gammaproteobacteria</taxon>
        <taxon>Enterobacterales</taxon>
        <taxon>Enterobacteriaceae</taxon>
        <taxon>Escherichia</taxon>
    </lineage>
</organism>